<proteinExistence type="inferred from homology"/>
<name>IF3_PASMU</name>
<sequence length="180" mass="20406">MKTVKKAPVANRPNRINDEIRVKEVRLIDQDGEQAGIVSIQQALEMAEQAELDLVEISPNAEPPVCRIMNYGKFLYEKGKAAKEQKKKQKVVQVKEIKFRPGTDEGDYQVKLRSLIRFLEEGDKAKITVRFRGREMAHQDIGLEVLERVKNDLAEISVVESAPGRLEGRQAVMVLAPKKK</sequence>
<dbReference type="EMBL" id="AE004439">
    <property type="protein sequence ID" value="AAK02686.1"/>
    <property type="status" value="ALT_INIT"/>
    <property type="molecule type" value="Genomic_DNA"/>
</dbReference>
<dbReference type="RefSeq" id="WP_071543641.1">
    <property type="nucleotide sequence ID" value="NC_002663.1"/>
</dbReference>
<dbReference type="SMR" id="Q9CN42"/>
<dbReference type="STRING" id="272843.PM0602"/>
<dbReference type="EnsemblBacteria" id="AAK02686">
    <property type="protein sequence ID" value="AAK02686"/>
    <property type="gene ID" value="PM0602"/>
</dbReference>
<dbReference type="GeneID" id="77208050"/>
<dbReference type="KEGG" id="pmu:PM0602"/>
<dbReference type="HOGENOM" id="CLU_054919_3_2_6"/>
<dbReference type="OrthoDB" id="9806014at2"/>
<dbReference type="Proteomes" id="UP000000809">
    <property type="component" value="Chromosome"/>
</dbReference>
<dbReference type="GO" id="GO:0005829">
    <property type="term" value="C:cytosol"/>
    <property type="evidence" value="ECO:0007669"/>
    <property type="project" value="TreeGrafter"/>
</dbReference>
<dbReference type="GO" id="GO:0016020">
    <property type="term" value="C:membrane"/>
    <property type="evidence" value="ECO:0007669"/>
    <property type="project" value="TreeGrafter"/>
</dbReference>
<dbReference type="GO" id="GO:0043022">
    <property type="term" value="F:ribosome binding"/>
    <property type="evidence" value="ECO:0007669"/>
    <property type="project" value="TreeGrafter"/>
</dbReference>
<dbReference type="GO" id="GO:0003743">
    <property type="term" value="F:translation initiation factor activity"/>
    <property type="evidence" value="ECO:0007669"/>
    <property type="project" value="UniProtKB-UniRule"/>
</dbReference>
<dbReference type="GO" id="GO:0032790">
    <property type="term" value="P:ribosome disassembly"/>
    <property type="evidence" value="ECO:0007669"/>
    <property type="project" value="TreeGrafter"/>
</dbReference>
<dbReference type="FunFam" id="3.10.20.80:FF:000001">
    <property type="entry name" value="Translation initiation factor IF-3"/>
    <property type="match status" value="1"/>
</dbReference>
<dbReference type="FunFam" id="3.30.110.10:FF:000001">
    <property type="entry name" value="Translation initiation factor IF-3"/>
    <property type="match status" value="1"/>
</dbReference>
<dbReference type="Gene3D" id="3.30.110.10">
    <property type="entry name" value="Translation initiation factor 3 (IF-3), C-terminal domain"/>
    <property type="match status" value="1"/>
</dbReference>
<dbReference type="Gene3D" id="3.10.20.80">
    <property type="entry name" value="Translation initiation factor 3 (IF-3), N-terminal domain"/>
    <property type="match status" value="1"/>
</dbReference>
<dbReference type="HAMAP" id="MF_00080">
    <property type="entry name" value="IF_3"/>
    <property type="match status" value="1"/>
</dbReference>
<dbReference type="InterPro" id="IPR036788">
    <property type="entry name" value="T_IF-3_C_sf"/>
</dbReference>
<dbReference type="InterPro" id="IPR036787">
    <property type="entry name" value="T_IF-3_N_sf"/>
</dbReference>
<dbReference type="InterPro" id="IPR019813">
    <property type="entry name" value="Translation_initiation_fac3_CS"/>
</dbReference>
<dbReference type="InterPro" id="IPR001288">
    <property type="entry name" value="Translation_initiation_fac_3"/>
</dbReference>
<dbReference type="InterPro" id="IPR019815">
    <property type="entry name" value="Translation_initiation_fac_3_C"/>
</dbReference>
<dbReference type="InterPro" id="IPR019814">
    <property type="entry name" value="Translation_initiation_fac_3_N"/>
</dbReference>
<dbReference type="NCBIfam" id="TIGR00168">
    <property type="entry name" value="infC"/>
    <property type="match status" value="1"/>
</dbReference>
<dbReference type="PANTHER" id="PTHR10938">
    <property type="entry name" value="TRANSLATION INITIATION FACTOR IF-3"/>
    <property type="match status" value="1"/>
</dbReference>
<dbReference type="PANTHER" id="PTHR10938:SF0">
    <property type="entry name" value="TRANSLATION INITIATION FACTOR IF-3, MITOCHONDRIAL"/>
    <property type="match status" value="1"/>
</dbReference>
<dbReference type="Pfam" id="PF00707">
    <property type="entry name" value="IF3_C"/>
    <property type="match status" value="1"/>
</dbReference>
<dbReference type="Pfam" id="PF05198">
    <property type="entry name" value="IF3_N"/>
    <property type="match status" value="1"/>
</dbReference>
<dbReference type="SUPFAM" id="SSF55200">
    <property type="entry name" value="Translation initiation factor IF3, C-terminal domain"/>
    <property type="match status" value="1"/>
</dbReference>
<dbReference type="SUPFAM" id="SSF54364">
    <property type="entry name" value="Translation initiation factor IF3, N-terminal domain"/>
    <property type="match status" value="1"/>
</dbReference>
<dbReference type="PROSITE" id="PS00938">
    <property type="entry name" value="IF3"/>
    <property type="match status" value="1"/>
</dbReference>
<gene>
    <name evidence="1" type="primary">infC</name>
    <name type="ordered locus">PM0602</name>
</gene>
<evidence type="ECO:0000255" key="1">
    <source>
        <dbReference type="HAMAP-Rule" id="MF_00080"/>
    </source>
</evidence>
<evidence type="ECO:0000305" key="2"/>
<protein>
    <recommendedName>
        <fullName evidence="1">Translation initiation factor IF-3</fullName>
    </recommendedName>
</protein>
<feature type="chain" id="PRO_0000177551" description="Translation initiation factor IF-3">
    <location>
        <begin position="1"/>
        <end position="180"/>
    </location>
</feature>
<organism>
    <name type="scientific">Pasteurella multocida (strain Pm70)</name>
    <dbReference type="NCBI Taxonomy" id="272843"/>
    <lineage>
        <taxon>Bacteria</taxon>
        <taxon>Pseudomonadati</taxon>
        <taxon>Pseudomonadota</taxon>
        <taxon>Gammaproteobacteria</taxon>
        <taxon>Pasteurellales</taxon>
        <taxon>Pasteurellaceae</taxon>
        <taxon>Pasteurella</taxon>
    </lineage>
</organism>
<comment type="function">
    <text evidence="1">IF-3 binds to the 30S ribosomal subunit and shifts the equilibrium between 70S ribosomes and their 50S and 30S subunits in favor of the free subunits, thus enhancing the availability of 30S subunits on which protein synthesis initiation begins.</text>
</comment>
<comment type="subunit">
    <text evidence="1">Monomer.</text>
</comment>
<comment type="subcellular location">
    <subcellularLocation>
        <location evidence="1">Cytoplasm</location>
    </subcellularLocation>
</comment>
<comment type="similarity">
    <text evidence="1">Belongs to the IF-3 family.</text>
</comment>
<comment type="sequence caution" evidence="2">
    <conflict type="erroneous initiation">
        <sequence resource="EMBL-CDS" id="AAK02686"/>
    </conflict>
</comment>
<keyword id="KW-0963">Cytoplasm</keyword>
<keyword id="KW-0396">Initiation factor</keyword>
<keyword id="KW-0648">Protein biosynthesis</keyword>
<keyword id="KW-1185">Reference proteome</keyword>
<reference key="1">
    <citation type="journal article" date="2001" name="Proc. Natl. Acad. Sci. U.S.A.">
        <title>Complete genomic sequence of Pasteurella multocida Pm70.</title>
        <authorList>
            <person name="May B.J."/>
            <person name="Zhang Q."/>
            <person name="Li L.L."/>
            <person name="Paustian M.L."/>
            <person name="Whittam T.S."/>
            <person name="Kapur V."/>
        </authorList>
    </citation>
    <scope>NUCLEOTIDE SEQUENCE [LARGE SCALE GENOMIC DNA]</scope>
    <source>
        <strain>Pm70</strain>
    </source>
</reference>
<accession>Q9CN42</accession>